<protein>
    <recommendedName>
        <fullName evidence="1">UPF0301 protein Bfl251</fullName>
    </recommendedName>
</protein>
<comment type="similarity">
    <text evidence="1">Belongs to the UPF0301 (AlgH) family.</text>
</comment>
<keyword id="KW-1185">Reference proteome</keyword>
<sequence>MFKNEITNLQNHFLVAMPTLQDPLFKKSVVYICEHNDTGAMGIVINKPVEKYTVETILKNLKITSTQRDPSVQLNHPVFSGGPLLNDRGFILHTPQTGFGSSINISSQTMITTSKDILETLGTPNQPKNILVALGYSGWTKGQLEQELIESTWIAVPADETILFHTPIFNRWNAAAKIIGVNMYNMNSQTGHA</sequence>
<accession>Q7VRG6</accession>
<name>Y251_BLOFL</name>
<organism>
    <name type="scientific">Blochmanniella floridana</name>
    <dbReference type="NCBI Taxonomy" id="203907"/>
    <lineage>
        <taxon>Bacteria</taxon>
        <taxon>Pseudomonadati</taxon>
        <taxon>Pseudomonadota</taxon>
        <taxon>Gammaproteobacteria</taxon>
        <taxon>Enterobacterales</taxon>
        <taxon>Enterobacteriaceae</taxon>
        <taxon>ant endosymbionts</taxon>
        <taxon>Candidatus Blochmanniella</taxon>
    </lineage>
</organism>
<evidence type="ECO:0000255" key="1">
    <source>
        <dbReference type="HAMAP-Rule" id="MF_00758"/>
    </source>
</evidence>
<gene>
    <name type="ordered locus">Bfl251</name>
</gene>
<reference key="1">
    <citation type="journal article" date="2003" name="Proc. Natl. Acad. Sci. U.S.A.">
        <title>The genome sequence of Blochmannia floridanus: comparative analysis of reduced genomes.</title>
        <authorList>
            <person name="Gil R."/>
            <person name="Silva F.J."/>
            <person name="Zientz E."/>
            <person name="Delmotte F."/>
            <person name="Gonzalez-Candelas F."/>
            <person name="Latorre A."/>
            <person name="Rausell C."/>
            <person name="Kamerbeek J."/>
            <person name="Gadau J."/>
            <person name="Hoelldobler B."/>
            <person name="van Ham R.C.H.J."/>
            <person name="Gross R."/>
            <person name="Moya A."/>
        </authorList>
    </citation>
    <scope>NUCLEOTIDE SEQUENCE [LARGE SCALE GENOMIC DNA]</scope>
</reference>
<dbReference type="EMBL" id="BX248583">
    <property type="protein sequence ID" value="CAD83322.1"/>
    <property type="molecule type" value="Genomic_DNA"/>
</dbReference>
<dbReference type="SMR" id="Q7VRG6"/>
<dbReference type="STRING" id="203907.Bfl251"/>
<dbReference type="KEGG" id="bfl:Bfl251"/>
<dbReference type="eggNOG" id="COG1678">
    <property type="taxonomic scope" value="Bacteria"/>
</dbReference>
<dbReference type="HOGENOM" id="CLU_057596_1_0_6"/>
<dbReference type="OrthoDB" id="9807486at2"/>
<dbReference type="Proteomes" id="UP000002192">
    <property type="component" value="Chromosome"/>
</dbReference>
<dbReference type="GO" id="GO:0005829">
    <property type="term" value="C:cytosol"/>
    <property type="evidence" value="ECO:0007669"/>
    <property type="project" value="TreeGrafter"/>
</dbReference>
<dbReference type="Gene3D" id="3.40.1740.10">
    <property type="entry name" value="VC0467-like"/>
    <property type="match status" value="1"/>
</dbReference>
<dbReference type="Gene3D" id="3.30.70.1300">
    <property type="entry name" value="VC0467-like domains"/>
    <property type="match status" value="1"/>
</dbReference>
<dbReference type="HAMAP" id="MF_00758">
    <property type="entry name" value="UPF0301"/>
    <property type="match status" value="1"/>
</dbReference>
<dbReference type="InterPro" id="IPR003774">
    <property type="entry name" value="AlgH-like"/>
</dbReference>
<dbReference type="NCBIfam" id="NF001266">
    <property type="entry name" value="PRK00228.1-1"/>
    <property type="match status" value="1"/>
</dbReference>
<dbReference type="PANTHER" id="PTHR30327">
    <property type="entry name" value="UNCHARACTERIZED PROTEIN YQGE"/>
    <property type="match status" value="1"/>
</dbReference>
<dbReference type="PANTHER" id="PTHR30327:SF1">
    <property type="entry name" value="UPF0301 PROTEIN YQGE"/>
    <property type="match status" value="1"/>
</dbReference>
<dbReference type="Pfam" id="PF02622">
    <property type="entry name" value="DUF179"/>
    <property type="match status" value="1"/>
</dbReference>
<dbReference type="SUPFAM" id="SSF143456">
    <property type="entry name" value="VC0467-like"/>
    <property type="match status" value="1"/>
</dbReference>
<feature type="chain" id="PRO_0000214313" description="UPF0301 protein Bfl251">
    <location>
        <begin position="1"/>
        <end position="193"/>
    </location>
</feature>
<proteinExistence type="inferred from homology"/>